<comment type="function">
    <text evidence="1">Part of a membrane-bound complex that couples electron transfer with translocation of ions across the membrane.</text>
</comment>
<comment type="cofactor">
    <cofactor evidence="1">
        <name>FMN</name>
        <dbReference type="ChEBI" id="CHEBI:58210"/>
    </cofactor>
</comment>
<comment type="subunit">
    <text evidence="1">The complex is composed of six subunits: RnfA, RnfB, RnfC, RnfD, RnfE and RnfG.</text>
</comment>
<comment type="subcellular location">
    <subcellularLocation>
        <location evidence="1">Cell inner membrane</location>
        <topology evidence="1">Multi-pass membrane protein</topology>
    </subcellularLocation>
</comment>
<comment type="similarity">
    <text evidence="1">Belongs to the NqrB/RnfD family.</text>
</comment>
<feature type="chain" id="PRO_1000191683" description="Ion-translocating oxidoreductase complex subunit D">
    <location>
        <begin position="1"/>
        <end position="348"/>
    </location>
</feature>
<feature type="transmembrane region" description="Helical" evidence="1">
    <location>
        <begin position="20"/>
        <end position="39"/>
    </location>
</feature>
<feature type="transmembrane region" description="Helical" evidence="1">
    <location>
        <begin position="72"/>
        <end position="91"/>
    </location>
</feature>
<feature type="transmembrane region" description="Helical" evidence="1">
    <location>
        <begin position="120"/>
        <end position="140"/>
    </location>
</feature>
<feature type="transmembrane region" description="Helical" evidence="1">
    <location>
        <begin position="214"/>
        <end position="234"/>
    </location>
</feature>
<feature type="transmembrane region" description="Helical" evidence="1">
    <location>
        <begin position="241"/>
        <end position="261"/>
    </location>
</feature>
<feature type="transmembrane region" description="Helical" evidence="1">
    <location>
        <begin position="266"/>
        <end position="286"/>
    </location>
</feature>
<feature type="transmembrane region" description="Helical" evidence="1">
    <location>
        <begin position="300"/>
        <end position="320"/>
    </location>
</feature>
<feature type="transmembrane region" description="Helical" evidence="1">
    <location>
        <begin position="321"/>
        <end position="341"/>
    </location>
</feature>
<feature type="modified residue" description="FMN phosphoryl threonine" evidence="1">
    <location>
        <position position="187"/>
    </location>
</feature>
<organism>
    <name type="scientific">Vibrio atlanticus (strain LGP32)</name>
    <name type="common">Vibrio splendidus (strain Mel32)</name>
    <dbReference type="NCBI Taxonomy" id="575788"/>
    <lineage>
        <taxon>Bacteria</taxon>
        <taxon>Pseudomonadati</taxon>
        <taxon>Pseudomonadota</taxon>
        <taxon>Gammaproteobacteria</taxon>
        <taxon>Vibrionales</taxon>
        <taxon>Vibrionaceae</taxon>
        <taxon>Vibrio</taxon>
    </lineage>
</organism>
<keyword id="KW-0997">Cell inner membrane</keyword>
<keyword id="KW-1003">Cell membrane</keyword>
<keyword id="KW-0249">Electron transport</keyword>
<keyword id="KW-0285">Flavoprotein</keyword>
<keyword id="KW-0288">FMN</keyword>
<keyword id="KW-0472">Membrane</keyword>
<keyword id="KW-0597">Phosphoprotein</keyword>
<keyword id="KW-1278">Translocase</keyword>
<keyword id="KW-0812">Transmembrane</keyword>
<keyword id="KW-1133">Transmembrane helix</keyword>
<keyword id="KW-0813">Transport</keyword>
<name>RNFD_VIBA3</name>
<evidence type="ECO:0000255" key="1">
    <source>
        <dbReference type="HAMAP-Rule" id="MF_00462"/>
    </source>
</evidence>
<reference key="1">
    <citation type="submission" date="2009-02" db="EMBL/GenBank/DDBJ databases">
        <title>Vibrio splendidus str. LGP32 complete genome.</title>
        <authorList>
            <person name="Mazel D."/>
            <person name="Le Roux F."/>
        </authorList>
    </citation>
    <scope>NUCLEOTIDE SEQUENCE [LARGE SCALE GENOMIC DNA]</scope>
    <source>
        <strain>LGP32</strain>
    </source>
</reference>
<accession>B7VLT5</accession>
<proteinExistence type="inferred from homology"/>
<gene>
    <name evidence="1" type="primary">rnfD</name>
    <name type="ordered locus">VS_0974</name>
</gene>
<dbReference type="EC" id="7.-.-.-" evidence="1"/>
<dbReference type="EMBL" id="FM954972">
    <property type="protein sequence ID" value="CAV17999.1"/>
    <property type="molecule type" value="Genomic_DNA"/>
</dbReference>
<dbReference type="SMR" id="B7VLT5"/>
<dbReference type="STRING" id="575788.VS_0974"/>
<dbReference type="KEGG" id="vsp:VS_0974"/>
<dbReference type="PATRIC" id="fig|575788.5.peg.2298"/>
<dbReference type="eggNOG" id="COG4658">
    <property type="taxonomic scope" value="Bacteria"/>
</dbReference>
<dbReference type="HOGENOM" id="CLU_042020_0_0_6"/>
<dbReference type="Proteomes" id="UP000009100">
    <property type="component" value="Chromosome 1"/>
</dbReference>
<dbReference type="GO" id="GO:0005886">
    <property type="term" value="C:plasma membrane"/>
    <property type="evidence" value="ECO:0007669"/>
    <property type="project" value="UniProtKB-SubCell"/>
</dbReference>
<dbReference type="GO" id="GO:0022900">
    <property type="term" value="P:electron transport chain"/>
    <property type="evidence" value="ECO:0007669"/>
    <property type="project" value="UniProtKB-UniRule"/>
</dbReference>
<dbReference type="GO" id="GO:0055085">
    <property type="term" value="P:transmembrane transport"/>
    <property type="evidence" value="ECO:0007669"/>
    <property type="project" value="InterPro"/>
</dbReference>
<dbReference type="HAMAP" id="MF_00462">
    <property type="entry name" value="RsxD_RnfD"/>
    <property type="match status" value="1"/>
</dbReference>
<dbReference type="InterPro" id="IPR004338">
    <property type="entry name" value="NqrB/RnfD"/>
</dbReference>
<dbReference type="InterPro" id="IPR011303">
    <property type="entry name" value="RnfD_bac"/>
</dbReference>
<dbReference type="NCBIfam" id="NF002011">
    <property type="entry name" value="PRK00816.1"/>
    <property type="match status" value="1"/>
</dbReference>
<dbReference type="NCBIfam" id="TIGR01946">
    <property type="entry name" value="rnfD"/>
    <property type="match status" value="1"/>
</dbReference>
<dbReference type="PANTHER" id="PTHR30578">
    <property type="entry name" value="ELECTRON TRANSPORT COMPLEX PROTEIN RNFD"/>
    <property type="match status" value="1"/>
</dbReference>
<dbReference type="PANTHER" id="PTHR30578:SF0">
    <property type="entry name" value="ION-TRANSLOCATING OXIDOREDUCTASE COMPLEX SUBUNIT D"/>
    <property type="match status" value="1"/>
</dbReference>
<dbReference type="Pfam" id="PF03116">
    <property type="entry name" value="NQR2_RnfD_RnfE"/>
    <property type="match status" value="1"/>
</dbReference>
<protein>
    <recommendedName>
        <fullName evidence="1">Ion-translocating oxidoreductase complex subunit D</fullName>
        <ecNumber evidence="1">7.-.-.-</ecNumber>
    </recommendedName>
    <alternativeName>
        <fullName evidence="1">Rnf electron transport complex subunit D</fullName>
    </alternativeName>
</protein>
<sequence length="348" mass="37744">MAFFIASSPHAHNRRSTPDLMKWVAICALPGLLAQTYFFGWGTLIQLVFAIALAVTFEAAVMLLRKRPPVMALRDYSAVVTAWLLSVAIPPHSPWWILVIGMFFAIVIAKHLYGGLGQNPFNPAMVAYVVLLISFPVQMTSWNAPASLTAEATSFVDSFLMIFTGFNNEGLSLQQARLGIDGTTMATPLDAFKTALTAGNTASEALSQPQFSWLAGVGWEWVNLAYLIGGLVLIKQRVIQWHIPVAFLGSLTLFSLMFLMFTPGETASPTIHLLSGATMLGAFFIATDPVSASTTVKGRLVFGALIGGLVFIIRSWGGFPDGVAFAVLLANMCVPLIDYYTKPRTYGH</sequence>